<keyword id="KW-1003">Cell membrane</keyword>
<keyword id="KW-0472">Membrane</keyword>
<keyword id="KW-1185">Reference proteome</keyword>
<keyword id="KW-0812">Transmembrane</keyword>
<keyword id="KW-1133">Transmembrane helix</keyword>
<reference key="1">
    <citation type="journal article" date="1998" name="Nature">
        <title>Deciphering the biology of Mycobacterium tuberculosis from the complete genome sequence.</title>
        <authorList>
            <person name="Cole S.T."/>
            <person name="Brosch R."/>
            <person name="Parkhill J."/>
            <person name="Garnier T."/>
            <person name="Churcher C.M."/>
            <person name="Harris D.E."/>
            <person name="Gordon S.V."/>
            <person name="Eiglmeier K."/>
            <person name="Gas S."/>
            <person name="Barry C.E. III"/>
            <person name="Tekaia F."/>
            <person name="Badcock K."/>
            <person name="Basham D."/>
            <person name="Brown D."/>
            <person name="Chillingworth T."/>
            <person name="Connor R."/>
            <person name="Davies R.M."/>
            <person name="Devlin K."/>
            <person name="Feltwell T."/>
            <person name="Gentles S."/>
            <person name="Hamlin N."/>
            <person name="Holroyd S."/>
            <person name="Hornsby T."/>
            <person name="Jagels K."/>
            <person name="Krogh A."/>
            <person name="McLean J."/>
            <person name="Moule S."/>
            <person name="Murphy L.D."/>
            <person name="Oliver S."/>
            <person name="Osborne J."/>
            <person name="Quail M.A."/>
            <person name="Rajandream M.A."/>
            <person name="Rogers J."/>
            <person name="Rutter S."/>
            <person name="Seeger K."/>
            <person name="Skelton S."/>
            <person name="Squares S."/>
            <person name="Squares R."/>
            <person name="Sulston J.E."/>
            <person name="Taylor K."/>
            <person name="Whitehead S."/>
            <person name="Barrell B.G."/>
        </authorList>
    </citation>
    <scope>NUCLEOTIDE SEQUENCE [LARGE SCALE GENOMIC DNA]</scope>
    <source>
        <strain>ATCC 25618 / H37Rv</strain>
    </source>
</reference>
<dbReference type="EMBL" id="AL123456">
    <property type="protein sequence ID" value="CCP42732.1"/>
    <property type="molecule type" value="Genomic_DNA"/>
</dbReference>
<dbReference type="PIR" id="H70698">
    <property type="entry name" value="H70698"/>
</dbReference>
<dbReference type="RefSeq" id="NP_214524.1">
    <property type="nucleotide sequence ID" value="NC_000962.3"/>
</dbReference>
<dbReference type="RefSeq" id="WP_003899772.1">
    <property type="nucleotide sequence ID" value="NZ_NVQJ01000005.1"/>
</dbReference>
<dbReference type="STRING" id="83332.Rv0010c"/>
<dbReference type="PaxDb" id="83332-Rv0010c"/>
<dbReference type="GeneID" id="887082"/>
<dbReference type="KEGG" id="mtu:Rv0010c"/>
<dbReference type="KEGG" id="mtv:RVBD_0010c"/>
<dbReference type="TubercuList" id="Rv0010c"/>
<dbReference type="eggNOG" id="ENOG5033K8W">
    <property type="taxonomic scope" value="Bacteria"/>
</dbReference>
<dbReference type="InParanoid" id="P9WMA3"/>
<dbReference type="OrthoDB" id="4381453at2"/>
<dbReference type="Proteomes" id="UP000001584">
    <property type="component" value="Chromosome"/>
</dbReference>
<dbReference type="GO" id="GO:0005886">
    <property type="term" value="C:plasma membrane"/>
    <property type="evidence" value="ECO:0007669"/>
    <property type="project" value="UniProtKB-SubCell"/>
</dbReference>
<dbReference type="InterPro" id="IPR019692">
    <property type="entry name" value="CFP-6_PH"/>
</dbReference>
<dbReference type="Pfam" id="PF10756">
    <property type="entry name" value="bPH_6"/>
    <property type="match status" value="1"/>
</dbReference>
<organism>
    <name type="scientific">Mycobacterium tuberculosis (strain ATCC 25618 / H37Rv)</name>
    <dbReference type="NCBI Taxonomy" id="83332"/>
    <lineage>
        <taxon>Bacteria</taxon>
        <taxon>Bacillati</taxon>
        <taxon>Actinomycetota</taxon>
        <taxon>Actinomycetes</taxon>
        <taxon>Mycobacteriales</taxon>
        <taxon>Mycobacteriaceae</taxon>
        <taxon>Mycobacterium</taxon>
        <taxon>Mycobacterium tuberculosis complex</taxon>
    </lineage>
</organism>
<evidence type="ECO:0000255" key="1"/>
<evidence type="ECO:0000305" key="2"/>
<protein>
    <recommendedName>
        <fullName>Uncharacterized protein Rv0010c</fullName>
    </recommendedName>
</protein>
<feature type="chain" id="PRO_0000103641" description="Uncharacterized protein Rv0010c">
    <location>
        <begin position="1"/>
        <end position="141"/>
    </location>
</feature>
<feature type="transmembrane region" description="Helical" evidence="1">
    <location>
        <begin position="12"/>
        <end position="32"/>
    </location>
</feature>
<feature type="transmembrane region" description="Helical" evidence="1">
    <location>
        <begin position="35"/>
        <end position="55"/>
    </location>
</feature>
<name>Y010_MYCTU</name>
<comment type="subcellular location">
    <subcellularLocation>
        <location evidence="2">Cell membrane</location>
        <topology evidence="2">Multi-pass membrane protein</topology>
    </subcellularLocation>
</comment>
<sequence length="141" mass="15167">MQQTAWAPRTSGIAGCGAGGVVMAIASVTLVTDTPGRVLTGVAALGLILFASATWRARPRLAITPDGLAIRGWFRTQLLRHSNIKIIRIDEFRRYGRLVRLLEIETVSGGLLILSRWDLGTDPVEVLDALTAAGYAGRGQR</sequence>
<accession>P9WMA3</accession>
<accession>L0T589</accession>
<accession>P71580</accession>
<proteinExistence type="predicted"/>
<gene>
    <name type="ordered locus">Rv0010c</name>
    <name type="ORF">MTCY10H4.10c</name>
</gene>